<gene>
    <name evidence="1" type="primary">hisG</name>
    <name type="ordered locus">Adeh_0363</name>
</gene>
<dbReference type="EC" id="2.4.2.17" evidence="1"/>
<dbReference type="EMBL" id="CP000251">
    <property type="protein sequence ID" value="ABC80139.1"/>
    <property type="molecule type" value="Genomic_DNA"/>
</dbReference>
<dbReference type="RefSeq" id="WP_011419422.1">
    <property type="nucleotide sequence ID" value="NC_007760.1"/>
</dbReference>
<dbReference type="SMR" id="Q2IMV6"/>
<dbReference type="STRING" id="290397.Adeh_0363"/>
<dbReference type="KEGG" id="ade:Adeh_0363"/>
<dbReference type="eggNOG" id="COG0040">
    <property type="taxonomic scope" value="Bacteria"/>
</dbReference>
<dbReference type="HOGENOM" id="CLU_038115_2_0_7"/>
<dbReference type="OrthoDB" id="9801867at2"/>
<dbReference type="UniPathway" id="UPA00031">
    <property type="reaction ID" value="UER00006"/>
</dbReference>
<dbReference type="Proteomes" id="UP000001935">
    <property type="component" value="Chromosome"/>
</dbReference>
<dbReference type="GO" id="GO:0005737">
    <property type="term" value="C:cytoplasm"/>
    <property type="evidence" value="ECO:0007669"/>
    <property type="project" value="UniProtKB-SubCell"/>
</dbReference>
<dbReference type="GO" id="GO:0005524">
    <property type="term" value="F:ATP binding"/>
    <property type="evidence" value="ECO:0007669"/>
    <property type="project" value="UniProtKB-KW"/>
</dbReference>
<dbReference type="GO" id="GO:0003879">
    <property type="term" value="F:ATP phosphoribosyltransferase activity"/>
    <property type="evidence" value="ECO:0007669"/>
    <property type="project" value="UniProtKB-UniRule"/>
</dbReference>
<dbReference type="GO" id="GO:0000105">
    <property type="term" value="P:L-histidine biosynthetic process"/>
    <property type="evidence" value="ECO:0007669"/>
    <property type="project" value="UniProtKB-UniRule"/>
</dbReference>
<dbReference type="CDD" id="cd13595">
    <property type="entry name" value="PBP2_HisGs"/>
    <property type="match status" value="1"/>
</dbReference>
<dbReference type="Gene3D" id="3.40.190.10">
    <property type="entry name" value="Periplasmic binding protein-like II"/>
    <property type="match status" value="2"/>
</dbReference>
<dbReference type="HAMAP" id="MF_01018">
    <property type="entry name" value="HisG_Short"/>
    <property type="match status" value="1"/>
</dbReference>
<dbReference type="InterPro" id="IPR013820">
    <property type="entry name" value="ATP_PRibTrfase_cat"/>
</dbReference>
<dbReference type="InterPro" id="IPR018198">
    <property type="entry name" value="ATP_PRibTrfase_CS"/>
</dbReference>
<dbReference type="InterPro" id="IPR001348">
    <property type="entry name" value="ATP_PRibTrfase_HisG"/>
</dbReference>
<dbReference type="InterPro" id="IPR024893">
    <property type="entry name" value="ATP_PRibTrfase_HisG_short"/>
</dbReference>
<dbReference type="NCBIfam" id="TIGR00070">
    <property type="entry name" value="hisG"/>
    <property type="match status" value="1"/>
</dbReference>
<dbReference type="PANTHER" id="PTHR21403:SF8">
    <property type="entry name" value="ATP PHOSPHORIBOSYLTRANSFERASE"/>
    <property type="match status" value="1"/>
</dbReference>
<dbReference type="PANTHER" id="PTHR21403">
    <property type="entry name" value="ATP PHOSPHORIBOSYLTRANSFERASE ATP-PRTASE"/>
    <property type="match status" value="1"/>
</dbReference>
<dbReference type="Pfam" id="PF01634">
    <property type="entry name" value="HisG"/>
    <property type="match status" value="1"/>
</dbReference>
<dbReference type="SUPFAM" id="SSF53850">
    <property type="entry name" value="Periplasmic binding protein-like II"/>
    <property type="match status" value="1"/>
</dbReference>
<dbReference type="PROSITE" id="PS01316">
    <property type="entry name" value="ATP_P_PHORIBOSYLTR"/>
    <property type="match status" value="1"/>
</dbReference>
<keyword id="KW-0028">Amino-acid biosynthesis</keyword>
<keyword id="KW-0067">ATP-binding</keyword>
<keyword id="KW-0963">Cytoplasm</keyword>
<keyword id="KW-0328">Glycosyltransferase</keyword>
<keyword id="KW-0368">Histidine biosynthesis</keyword>
<keyword id="KW-0547">Nucleotide-binding</keyword>
<keyword id="KW-1185">Reference proteome</keyword>
<keyword id="KW-0808">Transferase</keyword>
<organism>
    <name type="scientific">Anaeromyxobacter dehalogenans (strain 2CP-C)</name>
    <dbReference type="NCBI Taxonomy" id="290397"/>
    <lineage>
        <taxon>Bacteria</taxon>
        <taxon>Pseudomonadati</taxon>
        <taxon>Myxococcota</taxon>
        <taxon>Myxococcia</taxon>
        <taxon>Myxococcales</taxon>
        <taxon>Cystobacterineae</taxon>
        <taxon>Anaeromyxobacteraceae</taxon>
        <taxon>Anaeromyxobacter</taxon>
    </lineage>
</organism>
<proteinExistence type="inferred from homology"/>
<reference key="1">
    <citation type="submission" date="2006-01" db="EMBL/GenBank/DDBJ databases">
        <title>Complete sequence of Anaeromyxobacter dehalogenans 2CP-C.</title>
        <authorList>
            <person name="Copeland A."/>
            <person name="Lucas S."/>
            <person name="Lapidus A."/>
            <person name="Barry K."/>
            <person name="Detter J.C."/>
            <person name="Glavina T."/>
            <person name="Hammon N."/>
            <person name="Israni S."/>
            <person name="Pitluck S."/>
            <person name="Brettin T."/>
            <person name="Bruce D."/>
            <person name="Han C."/>
            <person name="Tapia R."/>
            <person name="Gilna P."/>
            <person name="Kiss H."/>
            <person name="Schmutz J."/>
            <person name="Larimer F."/>
            <person name="Land M."/>
            <person name="Kyrpides N."/>
            <person name="Anderson I."/>
            <person name="Sanford R.A."/>
            <person name="Ritalahti K.M."/>
            <person name="Thomas H.S."/>
            <person name="Kirby J.R."/>
            <person name="Zhulin I.B."/>
            <person name="Loeffler F.E."/>
            <person name="Richardson P."/>
        </authorList>
    </citation>
    <scope>NUCLEOTIDE SEQUENCE [LARGE SCALE GENOMIC DNA]</scope>
    <source>
        <strain>2CP-C</strain>
    </source>
</reference>
<comment type="function">
    <text evidence="1">Catalyzes the condensation of ATP and 5-phosphoribose 1-diphosphate to form N'-(5'-phosphoribosyl)-ATP (PR-ATP). Has a crucial role in the pathway because the rate of histidine biosynthesis seems to be controlled primarily by regulation of HisG enzymatic activity.</text>
</comment>
<comment type="catalytic activity">
    <reaction evidence="1">
        <text>1-(5-phospho-beta-D-ribosyl)-ATP + diphosphate = 5-phospho-alpha-D-ribose 1-diphosphate + ATP</text>
        <dbReference type="Rhea" id="RHEA:18473"/>
        <dbReference type="ChEBI" id="CHEBI:30616"/>
        <dbReference type="ChEBI" id="CHEBI:33019"/>
        <dbReference type="ChEBI" id="CHEBI:58017"/>
        <dbReference type="ChEBI" id="CHEBI:73183"/>
        <dbReference type="EC" id="2.4.2.17"/>
    </reaction>
</comment>
<comment type="pathway">
    <text evidence="1">Amino-acid biosynthesis; L-histidine biosynthesis; L-histidine from 5-phospho-alpha-D-ribose 1-diphosphate: step 1/9.</text>
</comment>
<comment type="subunit">
    <text evidence="1">Heteromultimer composed of HisG and HisZ subunits.</text>
</comment>
<comment type="subcellular location">
    <subcellularLocation>
        <location evidence="1">Cytoplasm</location>
    </subcellularLocation>
</comment>
<comment type="domain">
    <text>Lacks the C-terminal regulatory region which is replaced by HisZ.</text>
</comment>
<comment type="similarity">
    <text evidence="1">Belongs to the ATP phosphoribosyltransferase family. Short subfamily.</text>
</comment>
<name>HIS1_ANADE</name>
<sequence length="221" mass="23456">MPGTSELITVAVPKGRLLQESSALFERALGVSPRKLLEGTRKLAADAPEAGLRFISIRAGDVASYVEHGAAEVGIVGLDVLREEPRDLYEPLDLGIGRCTVIVARPKGARPLPRGVAPRVATKYLSLAARHFAAKGVPAEIIPLHGSIEVAPSLGLADTIVDITETGETLRANGLVIEEKVLEVSARLVVNRVALKLHPERLRLLIEALRAAVAAADAEAR</sequence>
<protein>
    <recommendedName>
        <fullName evidence="1">ATP phosphoribosyltransferase</fullName>
        <shortName evidence="1">ATP-PRT</shortName>
        <shortName evidence="1">ATP-PRTase</shortName>
        <ecNumber evidence="1">2.4.2.17</ecNumber>
    </recommendedName>
</protein>
<evidence type="ECO:0000255" key="1">
    <source>
        <dbReference type="HAMAP-Rule" id="MF_01018"/>
    </source>
</evidence>
<accession>Q2IMV6</accession>
<feature type="chain" id="PRO_0000319512" description="ATP phosphoribosyltransferase">
    <location>
        <begin position="1"/>
        <end position="221"/>
    </location>
</feature>